<proteinExistence type="inferred from homology"/>
<sequence>MSDISKASLPKAIFLMGPTASGKTALAIELRKILPVELISVDSALIYKGMDIGTAKPNAEELLAAPHRLLDIRDPSQAYSAADFRRDALAEMADITAAGRIPLLVGGTMLYFKALLEGLSPLPSADPEVRARIEQQAAEQGWESLHRQLQEVDPVAAARIHPNDPQRLSRALEVFFISGKTLTELTQTSGDALPYQVHQFAIAPASRELLHQRIEQRFHQMLASGFEAEVRALFARGDLHTDLPSIRCVGYRQMWSYLEGEISYDEMVYRGVCATRQLAKRQITWLRGWEGVHWLDSEKPEQARDEVLQVVGAIAG</sequence>
<feature type="chain" id="PRO_1000058433" description="tRNA dimethylallyltransferase">
    <location>
        <begin position="1"/>
        <end position="316"/>
    </location>
</feature>
<feature type="region of interest" description="Interaction with substrate tRNA" evidence="1">
    <location>
        <begin position="42"/>
        <end position="45"/>
    </location>
</feature>
<feature type="region of interest" description="Interaction with substrate tRNA" evidence="1">
    <location>
        <begin position="166"/>
        <end position="170"/>
    </location>
</feature>
<feature type="region of interest" description="Interaction with substrate tRNA" evidence="1">
    <location>
        <begin position="247"/>
        <end position="252"/>
    </location>
</feature>
<feature type="region of interest" description="Interaction with substrate tRNA" evidence="1">
    <location>
        <begin position="280"/>
        <end position="287"/>
    </location>
</feature>
<feature type="binding site" evidence="1">
    <location>
        <begin position="17"/>
        <end position="24"/>
    </location>
    <ligand>
        <name>ATP</name>
        <dbReference type="ChEBI" id="CHEBI:30616"/>
    </ligand>
</feature>
<feature type="binding site" evidence="1">
    <location>
        <begin position="19"/>
        <end position="24"/>
    </location>
    <ligand>
        <name>substrate</name>
    </ligand>
</feature>
<feature type="site" description="Interaction with substrate tRNA" evidence="1">
    <location>
        <position position="108"/>
    </location>
</feature>
<feature type="site" description="Interaction with substrate tRNA" evidence="1">
    <location>
        <position position="130"/>
    </location>
</feature>
<accession>A8A7R5</accession>
<gene>
    <name evidence="1" type="primary">miaA</name>
    <name type="ordered locus">EcHS_A4413</name>
</gene>
<name>MIAA_ECOHS</name>
<comment type="function">
    <text evidence="1">Catalyzes the transfer of a dimethylallyl group onto the adenine at position 37 in tRNAs that read codons beginning with uridine, leading to the formation of N6-(dimethylallyl)adenosine (i(6)A).</text>
</comment>
<comment type="catalytic activity">
    <reaction evidence="1">
        <text>adenosine(37) in tRNA + dimethylallyl diphosphate = N(6)-dimethylallyladenosine(37) in tRNA + diphosphate</text>
        <dbReference type="Rhea" id="RHEA:26482"/>
        <dbReference type="Rhea" id="RHEA-COMP:10162"/>
        <dbReference type="Rhea" id="RHEA-COMP:10375"/>
        <dbReference type="ChEBI" id="CHEBI:33019"/>
        <dbReference type="ChEBI" id="CHEBI:57623"/>
        <dbReference type="ChEBI" id="CHEBI:74411"/>
        <dbReference type="ChEBI" id="CHEBI:74415"/>
        <dbReference type="EC" id="2.5.1.75"/>
    </reaction>
</comment>
<comment type="cofactor">
    <cofactor evidence="1">
        <name>Mg(2+)</name>
        <dbReference type="ChEBI" id="CHEBI:18420"/>
    </cofactor>
</comment>
<comment type="subunit">
    <text evidence="1">Monomer.</text>
</comment>
<comment type="similarity">
    <text evidence="1">Belongs to the IPP transferase family.</text>
</comment>
<evidence type="ECO:0000255" key="1">
    <source>
        <dbReference type="HAMAP-Rule" id="MF_00185"/>
    </source>
</evidence>
<organism>
    <name type="scientific">Escherichia coli O9:H4 (strain HS)</name>
    <dbReference type="NCBI Taxonomy" id="331112"/>
    <lineage>
        <taxon>Bacteria</taxon>
        <taxon>Pseudomonadati</taxon>
        <taxon>Pseudomonadota</taxon>
        <taxon>Gammaproteobacteria</taxon>
        <taxon>Enterobacterales</taxon>
        <taxon>Enterobacteriaceae</taxon>
        <taxon>Escherichia</taxon>
    </lineage>
</organism>
<protein>
    <recommendedName>
        <fullName evidence="1">tRNA dimethylallyltransferase</fullName>
        <ecNumber evidence="1">2.5.1.75</ecNumber>
    </recommendedName>
    <alternativeName>
        <fullName evidence="1">Dimethylallyl diphosphate:tRNA dimethylallyltransferase</fullName>
        <shortName evidence="1">DMAPP:tRNA dimethylallyltransferase</shortName>
        <shortName evidence="1">DMATase</shortName>
    </alternativeName>
    <alternativeName>
        <fullName evidence="1">Isopentenyl-diphosphate:tRNA isopentenyltransferase</fullName>
        <shortName evidence="1">IPP transferase</shortName>
        <shortName evidence="1">IPPT</shortName>
        <shortName evidence="1">IPTase</shortName>
    </alternativeName>
</protein>
<reference key="1">
    <citation type="journal article" date="2008" name="J. Bacteriol.">
        <title>The pangenome structure of Escherichia coli: comparative genomic analysis of E. coli commensal and pathogenic isolates.</title>
        <authorList>
            <person name="Rasko D.A."/>
            <person name="Rosovitz M.J."/>
            <person name="Myers G.S.A."/>
            <person name="Mongodin E.F."/>
            <person name="Fricke W.F."/>
            <person name="Gajer P."/>
            <person name="Crabtree J."/>
            <person name="Sebaihia M."/>
            <person name="Thomson N.R."/>
            <person name="Chaudhuri R."/>
            <person name="Henderson I.R."/>
            <person name="Sperandio V."/>
            <person name="Ravel J."/>
        </authorList>
    </citation>
    <scope>NUCLEOTIDE SEQUENCE [LARGE SCALE GENOMIC DNA]</scope>
    <source>
        <strain>HS</strain>
    </source>
</reference>
<keyword id="KW-0067">ATP-binding</keyword>
<keyword id="KW-0460">Magnesium</keyword>
<keyword id="KW-0547">Nucleotide-binding</keyword>
<keyword id="KW-0808">Transferase</keyword>
<keyword id="KW-0819">tRNA processing</keyword>
<dbReference type="EC" id="2.5.1.75" evidence="1"/>
<dbReference type="EMBL" id="CP000802">
    <property type="protein sequence ID" value="ABV08569.1"/>
    <property type="molecule type" value="Genomic_DNA"/>
</dbReference>
<dbReference type="RefSeq" id="WP_001280345.1">
    <property type="nucleotide sequence ID" value="NC_009800.1"/>
</dbReference>
<dbReference type="SMR" id="A8A7R5"/>
<dbReference type="GeneID" id="93777650"/>
<dbReference type="KEGG" id="ecx:EcHS_A4413"/>
<dbReference type="HOGENOM" id="CLU_032616_0_0_6"/>
<dbReference type="GO" id="GO:0005524">
    <property type="term" value="F:ATP binding"/>
    <property type="evidence" value="ECO:0007669"/>
    <property type="project" value="UniProtKB-UniRule"/>
</dbReference>
<dbReference type="GO" id="GO:0052381">
    <property type="term" value="F:tRNA dimethylallyltransferase activity"/>
    <property type="evidence" value="ECO:0007669"/>
    <property type="project" value="UniProtKB-UniRule"/>
</dbReference>
<dbReference type="GO" id="GO:0006400">
    <property type="term" value="P:tRNA modification"/>
    <property type="evidence" value="ECO:0007669"/>
    <property type="project" value="TreeGrafter"/>
</dbReference>
<dbReference type="FunFam" id="1.10.20.140:FF:000001">
    <property type="entry name" value="tRNA dimethylallyltransferase"/>
    <property type="match status" value="1"/>
</dbReference>
<dbReference type="FunFam" id="1.10.287.890:FF:000001">
    <property type="entry name" value="tRNA dimethylallyltransferase"/>
    <property type="match status" value="1"/>
</dbReference>
<dbReference type="Gene3D" id="1.10.20.140">
    <property type="match status" value="1"/>
</dbReference>
<dbReference type="Gene3D" id="1.10.287.890">
    <property type="entry name" value="Crystal structure of tRNA isopentenylpyrophosphate transferase (bh2366) domain"/>
    <property type="match status" value="1"/>
</dbReference>
<dbReference type="Gene3D" id="3.40.50.300">
    <property type="entry name" value="P-loop containing nucleotide triphosphate hydrolases"/>
    <property type="match status" value="1"/>
</dbReference>
<dbReference type="HAMAP" id="MF_00185">
    <property type="entry name" value="IPP_trans"/>
    <property type="match status" value="1"/>
</dbReference>
<dbReference type="InterPro" id="IPR039657">
    <property type="entry name" value="Dimethylallyltransferase"/>
</dbReference>
<dbReference type="InterPro" id="IPR018022">
    <property type="entry name" value="IPT"/>
</dbReference>
<dbReference type="InterPro" id="IPR027417">
    <property type="entry name" value="P-loop_NTPase"/>
</dbReference>
<dbReference type="NCBIfam" id="TIGR00174">
    <property type="entry name" value="miaA"/>
    <property type="match status" value="1"/>
</dbReference>
<dbReference type="PANTHER" id="PTHR11088">
    <property type="entry name" value="TRNA DIMETHYLALLYLTRANSFERASE"/>
    <property type="match status" value="1"/>
</dbReference>
<dbReference type="PANTHER" id="PTHR11088:SF60">
    <property type="entry name" value="TRNA DIMETHYLALLYLTRANSFERASE"/>
    <property type="match status" value="1"/>
</dbReference>
<dbReference type="Pfam" id="PF01715">
    <property type="entry name" value="IPPT"/>
    <property type="match status" value="1"/>
</dbReference>
<dbReference type="SUPFAM" id="SSF52540">
    <property type="entry name" value="P-loop containing nucleoside triphosphate hydrolases"/>
    <property type="match status" value="1"/>
</dbReference>